<reference evidence="12" key="1">
    <citation type="journal article" date="1999" name="Biochim. Biophys. Acta">
        <title>Molecular cloning and sequencing of cDNAs encoding homologues of human Ku70 and Ku80 autoantigen from Xenopus and their expression in various Xenopus tissues.</title>
        <authorList>
            <person name="Yagura T."/>
            <person name="Sumi K."/>
        </authorList>
    </citation>
    <scope>NUCLEOTIDE SEQUENCE [MRNA]</scope>
    <scope>PROTEIN SEQUENCE OF 27-34; 274-281; 606-613 AND 688-700</scope>
    <scope>TISSUE SPECIFICITY</scope>
    <source>
        <tissue evidence="12">Ovary</tissue>
    </source>
</reference>
<reference evidence="11" key="2">
    <citation type="submission" date="2004-07" db="EMBL/GenBank/DDBJ databases">
        <authorList>
            <consortium name="NIH - Xenopus Gene Collection (XGC) project"/>
        </authorList>
    </citation>
    <scope>NUCLEOTIDE SEQUENCE [LARGE SCALE MRNA]</scope>
    <source>
        <tissue evidence="11">Kidney</tissue>
    </source>
</reference>
<reference evidence="10" key="3">
    <citation type="journal article" date="2008" name="J. Cell Biol.">
        <title>Ku80 removal from DNA through double strand break-induced ubiquitylation.</title>
        <authorList>
            <person name="Postow L."/>
            <person name="Ghenoiu C."/>
            <person name="Woo E.M."/>
            <person name="Krutchinsky A.N."/>
            <person name="Chait B.T."/>
            <person name="Funabiki H."/>
        </authorList>
    </citation>
    <scope>IDENTIFICATION BY MASS SPECTROMETRY</scope>
    <scope>DOMAIN</scope>
    <scope>UBIQUITINATION</scope>
    <scope>MUTAGENESIS OF TRP-275</scope>
</reference>
<reference evidence="13 14 15 16 17 18" key="4">
    <citation type="journal article" date="2020" name="DNA Repair">
        <title>Ligand binding characteristics of the Ku80 von Willebrand domain.</title>
        <authorList>
            <person name="Kim K."/>
            <person name="Min J."/>
            <person name="Kirby T.W."/>
            <person name="Gabel S.A."/>
            <person name="Pedersen L.C."/>
            <person name="London R.E."/>
        </authorList>
    </citation>
    <scope>X-RAY CRYSTALLOGRAPHY (1.47 ANGSTROMS) OF 1-242 OF WILD-TYPE AND MUTANT ALA-229 IN COMPLEX WITH KBM MOTIF-CONTAINING PEPTIDES FROM HUMAN APLF; HUMAN CYREN; HUMAN WRN AND WITH KBMX MOTIF-CONTAINING PEPTIDE FROM X.LAEVIS NHEJ1</scope>
    <scope>DOMAIN</scope>
    <scope>MUTAGENESIS OF SER-229</scope>
</reference>
<evidence type="ECO:0000250" key="1">
    <source>
        <dbReference type="UniProtKB" id="P13010"/>
    </source>
</evidence>
<evidence type="ECO:0000255" key="2"/>
<evidence type="ECO:0000255" key="3">
    <source>
        <dbReference type="PIRNR" id="PIRNR016570"/>
    </source>
</evidence>
<evidence type="ECO:0000255" key="4">
    <source>
        <dbReference type="PROSITE-ProRule" id="PRU00219"/>
    </source>
</evidence>
<evidence type="ECO:0000256" key="5">
    <source>
        <dbReference type="SAM" id="MobiDB-lite"/>
    </source>
</evidence>
<evidence type="ECO:0000269" key="6">
    <source>
    </source>
</evidence>
<evidence type="ECO:0000269" key="7">
    <source>
    </source>
</evidence>
<evidence type="ECO:0000269" key="8">
    <source>
    </source>
</evidence>
<evidence type="ECO:0000303" key="9">
    <source>
    </source>
</evidence>
<evidence type="ECO:0000305" key="10"/>
<evidence type="ECO:0000312" key="11">
    <source>
        <dbReference type="EMBL" id="AAH77439.1"/>
    </source>
</evidence>
<evidence type="ECO:0000312" key="12">
    <source>
        <dbReference type="EMBL" id="BAA76954.1"/>
    </source>
</evidence>
<evidence type="ECO:0000312" key="13">
    <source>
        <dbReference type="PDB" id="6TYT"/>
    </source>
</evidence>
<evidence type="ECO:0000312" key="14">
    <source>
        <dbReference type="PDB" id="6TYU"/>
    </source>
</evidence>
<evidence type="ECO:0000312" key="15">
    <source>
        <dbReference type="PDB" id="6TYV"/>
    </source>
</evidence>
<evidence type="ECO:0000312" key="16">
    <source>
        <dbReference type="PDB" id="6TYW"/>
    </source>
</evidence>
<evidence type="ECO:0000312" key="17">
    <source>
        <dbReference type="PDB" id="6TYX"/>
    </source>
</evidence>
<evidence type="ECO:0000312" key="18">
    <source>
        <dbReference type="PDB" id="6TYZ"/>
    </source>
</evidence>
<evidence type="ECO:0000312" key="19">
    <source>
        <dbReference type="Xenbase" id="XB-GENE-996228"/>
    </source>
</evidence>
<evidence type="ECO:0007829" key="20">
    <source>
        <dbReference type="PDB" id="6TYU"/>
    </source>
</evidence>
<evidence type="ECO:0007829" key="21">
    <source>
        <dbReference type="PDB" id="6TYV"/>
    </source>
</evidence>
<evidence type="ECO:0007829" key="22">
    <source>
        <dbReference type="PDB" id="6TYX"/>
    </source>
</evidence>
<evidence type="ECO:0007829" key="23">
    <source>
        <dbReference type="PDB" id="6TYZ"/>
    </source>
</evidence>
<dbReference type="EC" id="3.6.4.-" evidence="3"/>
<dbReference type="EMBL" id="AB020609">
    <property type="protein sequence ID" value="BAA76954.1"/>
    <property type="molecule type" value="mRNA"/>
</dbReference>
<dbReference type="EMBL" id="BC077439">
    <property type="protein sequence ID" value="AAH77439.1"/>
    <property type="molecule type" value="mRNA"/>
</dbReference>
<dbReference type="RefSeq" id="NP_001081127.1">
    <property type="nucleotide sequence ID" value="NM_001087658.1"/>
</dbReference>
<dbReference type="PDB" id="6TYT">
    <property type="method" value="X-ray"/>
    <property type="resolution" value="2.40 A"/>
    <property type="chains" value="A=1-242"/>
</dbReference>
<dbReference type="PDB" id="6TYU">
    <property type="method" value="X-ray"/>
    <property type="resolution" value="1.47 A"/>
    <property type="chains" value="A=1-242"/>
</dbReference>
<dbReference type="PDB" id="6TYV">
    <property type="method" value="X-ray"/>
    <property type="resolution" value="1.93 A"/>
    <property type="chains" value="A=1-242"/>
</dbReference>
<dbReference type="PDB" id="6TYW">
    <property type="method" value="X-ray"/>
    <property type="resolution" value="1.70 A"/>
    <property type="chains" value="A=1-242"/>
</dbReference>
<dbReference type="PDB" id="6TYX">
    <property type="method" value="X-ray"/>
    <property type="resolution" value="1.90 A"/>
    <property type="chains" value="A/B=1-242"/>
</dbReference>
<dbReference type="PDB" id="6TYZ">
    <property type="method" value="X-ray"/>
    <property type="resolution" value="1.51 A"/>
    <property type="chains" value="A=1-242"/>
</dbReference>
<dbReference type="PDBsum" id="6TYT"/>
<dbReference type="PDBsum" id="6TYU"/>
<dbReference type="PDBsum" id="6TYV"/>
<dbReference type="PDBsum" id="6TYW"/>
<dbReference type="PDBsum" id="6TYX"/>
<dbReference type="PDBsum" id="6TYZ"/>
<dbReference type="SMR" id="Q6DDS9"/>
<dbReference type="DNASU" id="394397"/>
<dbReference type="GeneID" id="394397"/>
<dbReference type="KEGG" id="xla:394397"/>
<dbReference type="AGR" id="Xenbase:XB-GENE-996228"/>
<dbReference type="CTD" id="394397"/>
<dbReference type="Xenbase" id="XB-GENE-996228">
    <property type="gene designation" value="xrcc5.L"/>
</dbReference>
<dbReference type="OrthoDB" id="30826at2759"/>
<dbReference type="Proteomes" id="UP000186698">
    <property type="component" value="Chromosome 9_10L"/>
</dbReference>
<dbReference type="Bgee" id="394397">
    <property type="expression patterns" value="Expressed in pancreas and 19 other cell types or tissues"/>
</dbReference>
<dbReference type="GO" id="GO:0043564">
    <property type="term" value="C:Ku70:Ku80 complex"/>
    <property type="evidence" value="ECO:0000318"/>
    <property type="project" value="GO_Central"/>
</dbReference>
<dbReference type="GO" id="GO:0005524">
    <property type="term" value="F:ATP binding"/>
    <property type="evidence" value="ECO:0007669"/>
    <property type="project" value="UniProtKB-KW"/>
</dbReference>
<dbReference type="GO" id="GO:0003684">
    <property type="term" value="F:damaged DNA binding"/>
    <property type="evidence" value="ECO:0007669"/>
    <property type="project" value="InterPro"/>
</dbReference>
<dbReference type="GO" id="GO:0003678">
    <property type="term" value="F:DNA helicase activity"/>
    <property type="evidence" value="ECO:0007669"/>
    <property type="project" value="InterPro"/>
</dbReference>
<dbReference type="GO" id="GO:0003690">
    <property type="term" value="F:double-stranded DNA binding"/>
    <property type="evidence" value="ECO:0007669"/>
    <property type="project" value="TreeGrafter"/>
</dbReference>
<dbReference type="GO" id="GO:0016787">
    <property type="term" value="F:hydrolase activity"/>
    <property type="evidence" value="ECO:0007669"/>
    <property type="project" value="UniProtKB-KW"/>
</dbReference>
<dbReference type="GO" id="GO:0042162">
    <property type="term" value="F:telomeric DNA binding"/>
    <property type="evidence" value="ECO:0000318"/>
    <property type="project" value="GO_Central"/>
</dbReference>
<dbReference type="GO" id="GO:0006310">
    <property type="term" value="P:DNA recombination"/>
    <property type="evidence" value="ECO:0007669"/>
    <property type="project" value="UniProtKB-KW"/>
</dbReference>
<dbReference type="GO" id="GO:0006303">
    <property type="term" value="P:double-strand break repair via nonhomologous end joining"/>
    <property type="evidence" value="ECO:0000318"/>
    <property type="project" value="GO_Central"/>
</dbReference>
<dbReference type="GO" id="GO:0000723">
    <property type="term" value="P:telomere maintenance"/>
    <property type="evidence" value="ECO:0000318"/>
    <property type="project" value="GO_Central"/>
</dbReference>
<dbReference type="CDD" id="cd00873">
    <property type="entry name" value="KU80"/>
    <property type="match status" value="1"/>
</dbReference>
<dbReference type="CDD" id="cd01458">
    <property type="entry name" value="vWA_ku"/>
    <property type="match status" value="1"/>
</dbReference>
<dbReference type="FunFam" id="1.10.1600.10:FF:000002">
    <property type="entry name" value="X-ray repair cross-complementing protein 5"/>
    <property type="match status" value="1"/>
</dbReference>
<dbReference type="FunFam" id="1.25.40.240:FF:000001">
    <property type="entry name" value="X-ray repair cross-complementing protein 5"/>
    <property type="match status" value="1"/>
</dbReference>
<dbReference type="FunFam" id="2.40.290.10:FF:000005">
    <property type="entry name" value="X-ray repair cross-complementing protein 5"/>
    <property type="match status" value="1"/>
</dbReference>
<dbReference type="FunFam" id="3.40.50.410:FF:000055">
    <property type="entry name" value="X-ray repair cross-complementing protein 5"/>
    <property type="match status" value="1"/>
</dbReference>
<dbReference type="Gene3D" id="1.10.1600.10">
    <property type="match status" value="1"/>
</dbReference>
<dbReference type="Gene3D" id="2.40.290.10">
    <property type="match status" value="1"/>
</dbReference>
<dbReference type="Gene3D" id="1.25.40.240">
    <property type="entry name" value="Ku, C-terminal domain"/>
    <property type="match status" value="1"/>
</dbReference>
<dbReference type="Gene3D" id="3.40.50.410">
    <property type="entry name" value="von Willebrand factor, type A domain"/>
    <property type="match status" value="1"/>
</dbReference>
<dbReference type="InterPro" id="IPR006164">
    <property type="entry name" value="Ku70/Ku80_beta-barrel_dom"/>
</dbReference>
<dbReference type="InterPro" id="IPR024193">
    <property type="entry name" value="Ku80"/>
</dbReference>
<dbReference type="InterPro" id="IPR005160">
    <property type="entry name" value="Ku_C"/>
</dbReference>
<dbReference type="InterPro" id="IPR036494">
    <property type="entry name" value="Ku_C_sf"/>
</dbReference>
<dbReference type="InterPro" id="IPR005161">
    <property type="entry name" value="Ku_N"/>
</dbReference>
<dbReference type="InterPro" id="IPR014893">
    <property type="entry name" value="Ku_PK_bind"/>
</dbReference>
<dbReference type="InterPro" id="IPR016194">
    <property type="entry name" value="SPOC-like_C_dom_sf"/>
</dbReference>
<dbReference type="InterPro" id="IPR036465">
    <property type="entry name" value="vWFA_dom_sf"/>
</dbReference>
<dbReference type="PANTHER" id="PTHR12604">
    <property type="entry name" value="KU AUTOANTIGEN DNA HELICASE"/>
    <property type="match status" value="1"/>
</dbReference>
<dbReference type="PANTHER" id="PTHR12604:SF4">
    <property type="entry name" value="X-RAY REPAIR CROSS-COMPLEMENTING PROTEIN 5"/>
    <property type="match status" value="1"/>
</dbReference>
<dbReference type="Pfam" id="PF02735">
    <property type="entry name" value="Ku"/>
    <property type="match status" value="1"/>
</dbReference>
<dbReference type="Pfam" id="PF03730">
    <property type="entry name" value="Ku_C"/>
    <property type="match status" value="1"/>
</dbReference>
<dbReference type="Pfam" id="PF03731">
    <property type="entry name" value="Ku_N"/>
    <property type="match status" value="1"/>
</dbReference>
<dbReference type="Pfam" id="PF08785">
    <property type="entry name" value="Ku_PK_bind"/>
    <property type="match status" value="1"/>
</dbReference>
<dbReference type="PIRSF" id="PIRSF016570">
    <property type="entry name" value="Ku80"/>
    <property type="match status" value="1"/>
</dbReference>
<dbReference type="SMART" id="SM00559">
    <property type="entry name" value="Ku78"/>
    <property type="match status" value="1"/>
</dbReference>
<dbReference type="SUPFAM" id="SSF101420">
    <property type="entry name" value="C-terminal domain of Ku80"/>
    <property type="match status" value="1"/>
</dbReference>
<dbReference type="SUPFAM" id="SSF100939">
    <property type="entry name" value="SPOC domain-like"/>
    <property type="match status" value="1"/>
</dbReference>
<dbReference type="SUPFAM" id="SSF53300">
    <property type="entry name" value="vWA-like"/>
    <property type="match status" value="1"/>
</dbReference>
<comment type="function">
    <text evidence="1">Single-stranded DNA-dependent ATP-dependent helicase that plays a key role in DNA non-homologous end joining (NHEJ).</text>
</comment>
<comment type="subunit">
    <text evidence="1">Heterodimer composed of xrcc5/Ku80 and xrcc6/Ku70.</text>
</comment>
<comment type="subcellular location">
    <subcellularLocation>
        <location evidence="3">Nucleus</location>
    </subcellularLocation>
</comment>
<comment type="tissue specificity">
    <text evidence="6">Expressed at high levels in oocyte and testis.</text>
</comment>
<comment type="domain">
    <text evidence="8">The VWFA domain interacts with the KBM (Ku-binding motif) found in a number of DNA repair proteins.</text>
</comment>
<comment type="domain">
    <text evidence="7">The N-terminal and C-terminal regions are not required for binding to DNA or for degradation of the protein with only the central region being required for these processes.</text>
</comment>
<comment type="PTM">
    <text evidence="7">Ubiquitinated via 'Lys-48'-linked polyubiquitination at DNA double strand break sites (DSBs), leading to its release from DSBs and subsequent proteasomal degradation (PubMed:18678709). Polyubiquitination is not required for completion of NHEJ (PubMed:18678709).</text>
</comment>
<comment type="similarity">
    <text evidence="3">Belongs to the ku80 family.</text>
</comment>
<gene>
    <name evidence="19" type="primary">xrcc5.L</name>
    <name evidence="19" type="synonym">xrcc5</name>
</gene>
<name>XRCC5_XENLA</name>
<feature type="chain" id="PRO_5040058360" description="X-ray repair cross-complementing protein 5" evidence="2">
    <location>
        <begin position="1"/>
        <end position="726"/>
    </location>
</feature>
<feature type="domain" description="VWFA" evidence="4">
    <location>
        <begin position="8"/>
        <end position="160"/>
    </location>
</feature>
<feature type="domain" description="Ku" evidence="2">
    <location>
        <begin position="253"/>
        <end position="449"/>
    </location>
</feature>
<feature type="region of interest" description="Leucine-zipper" evidence="10">
    <location>
        <begin position="137"/>
        <end position="164"/>
    </location>
</feature>
<feature type="region of interest" description="Disordered" evidence="5">
    <location>
        <begin position="175"/>
        <end position="198"/>
    </location>
</feature>
<feature type="short sequence motif" description="EEXXXDL motif" evidence="1">
    <location>
        <begin position="714"/>
        <end position="722"/>
    </location>
</feature>
<feature type="compositionally biased region" description="Low complexity" evidence="5">
    <location>
        <begin position="175"/>
        <end position="186"/>
    </location>
</feature>
<feature type="mutagenesis site" description="Allows binding to nhej1 KBMX motif-containing peptide." evidence="8">
    <original>S</original>
    <variation>A</variation>
    <location>
        <position position="229"/>
    </location>
</feature>
<feature type="mutagenesis site" description="Does not affect ubiquitination or completion of NHEJ but inhibits release of the protein from DNA and its subsequent proteasomal degradation." evidence="7">
    <original>W</original>
    <variation>R</variation>
    <location>
        <position position="275"/>
    </location>
</feature>
<feature type="sequence conflict" description="In Ref. 1; BAA76954." evidence="10" ref="1">
    <original>D</original>
    <variation>N</variation>
    <location>
        <position position="144"/>
    </location>
</feature>
<feature type="sequence conflict" description="In Ref. 1; BAA76954." evidence="10" ref="1">
    <original>MPWPC</original>
    <variation>IPWPF</variation>
    <location>
        <begin position="244"/>
        <end position="248"/>
    </location>
</feature>
<feature type="sequence conflict" description="In Ref. 1; BAA76954." evidence="10" ref="1">
    <original>E</original>
    <variation>G</variation>
    <location>
        <position position="286"/>
    </location>
</feature>
<feature type="sequence conflict" description="In Ref. 1; BAA76954." evidence="10" ref="1">
    <original>T</original>
    <variation>K</variation>
    <location>
        <position position="529"/>
    </location>
</feature>
<feature type="sequence conflict" description="In Ref. 1; BAA76954." evidence="10" ref="1">
    <original>V</original>
    <variation>A</variation>
    <location>
        <position position="587"/>
    </location>
</feature>
<feature type="strand" evidence="20">
    <location>
        <begin position="8"/>
        <end position="14"/>
    </location>
</feature>
<feature type="helix" evidence="20">
    <location>
        <begin position="17"/>
        <end position="20"/>
    </location>
</feature>
<feature type="helix" evidence="22">
    <location>
        <begin position="23"/>
        <end position="25"/>
    </location>
</feature>
<feature type="helix" evidence="20">
    <location>
        <begin position="29"/>
        <end position="46"/>
    </location>
</feature>
<feature type="strand" evidence="20">
    <location>
        <begin position="52"/>
        <end position="59"/>
    </location>
</feature>
<feature type="strand" evidence="21">
    <location>
        <begin position="70"/>
        <end position="73"/>
    </location>
</feature>
<feature type="strand" evidence="20">
    <location>
        <begin position="76"/>
        <end position="83"/>
    </location>
</feature>
<feature type="helix" evidence="20">
    <location>
        <begin position="87"/>
        <end position="95"/>
    </location>
</feature>
<feature type="helix" evidence="20">
    <location>
        <begin position="106"/>
        <end position="120"/>
    </location>
</feature>
<feature type="turn" evidence="20">
    <location>
        <begin position="121"/>
        <end position="123"/>
    </location>
</feature>
<feature type="strand" evidence="20">
    <location>
        <begin position="129"/>
        <end position="134"/>
    </location>
</feature>
<feature type="helix" evidence="22">
    <location>
        <begin position="143"/>
        <end position="145"/>
    </location>
</feature>
<feature type="helix" evidence="20">
    <location>
        <begin position="146"/>
        <end position="155"/>
    </location>
</feature>
<feature type="strand" evidence="20">
    <location>
        <begin position="158"/>
        <end position="166"/>
    </location>
</feature>
<feature type="helix" evidence="20">
    <location>
        <begin position="198"/>
        <end position="215"/>
    </location>
</feature>
<feature type="helix" evidence="20">
    <location>
        <begin position="216"/>
        <end position="221"/>
    </location>
</feature>
<feature type="strand" evidence="23">
    <location>
        <begin position="223"/>
        <end position="225"/>
    </location>
</feature>
<feature type="helix" evidence="20">
    <location>
        <begin position="226"/>
        <end position="233"/>
    </location>
</feature>
<sequence>MARAAKSAVVLCMDVGLAMSHSNQGKESPFEQAKKVMMLFLQRQVFAESKDEIAVVLYGTDTTDNALAREDQYENISVHRHLMLPDFDLLEQIENVVEPGSVQADFLDALIVSMDLLQKETLGKKYTRLHIAVFSDLSSPFSVDQLEVIIANLKKAEITLQFFLPFSVDEEEFGGSSNNRGNAGSSDRGCGPGKGLSDQQKEGIEMVRKIMFSLDGEEGLSEVFTFRDSLERLSIFKKIERRPMPWPCQLTVGSSLSIRIVGYKSVTEEKVKKTWTHIDAKTHKKEDIKKETVYCLNNDEETEVEKDDTIQGFRYGSDIVPFSKVDQEQMKYKSEGKCFAVLGFTKSSMVLSNQFVGNQVIRMFAPSDDEAASVALSALIHALDEMDMVAIVRYVYDRRSNPQVGVAFPHIKDKYECLVYVQLPFMEDIRQYLFSSLKNNKKFTPTESQNSAIDSLIDSMSLIYDDGETKEDLFKTSKLPNPQFQRLFQCLQHKALNPESPLPPIDQHLLDMLETPVEVKEACMAPLATVKACFPLQEATKRKEVKTADEIFTKKTDEPDAKKLKEDDEGFSLLRLADGNVTSVGSVNPDQDFQALLRQKNTDFKHVSDQLIKRIYECLDVKQTQYYMKSILCIKTFREEAIKLSQVRLFNDFLQLLKQKVDGSALMEFWDIIVQEEISLITSSESKGSSVTPEEAKQFLAQKEEKVEEAAMMEDEGDVDDLLDMM</sequence>
<organism evidence="11">
    <name type="scientific">Xenopus laevis</name>
    <name type="common">African clawed frog</name>
    <dbReference type="NCBI Taxonomy" id="8355"/>
    <lineage>
        <taxon>Eukaryota</taxon>
        <taxon>Metazoa</taxon>
        <taxon>Chordata</taxon>
        <taxon>Craniata</taxon>
        <taxon>Vertebrata</taxon>
        <taxon>Euteleostomi</taxon>
        <taxon>Amphibia</taxon>
        <taxon>Batrachia</taxon>
        <taxon>Anura</taxon>
        <taxon>Pipoidea</taxon>
        <taxon>Pipidae</taxon>
        <taxon>Xenopodinae</taxon>
        <taxon>Xenopus</taxon>
        <taxon>Xenopus</taxon>
    </lineage>
</organism>
<protein>
    <recommendedName>
        <fullName evidence="3">X-ray repair cross-complementing protein 5</fullName>
        <ecNumber evidence="3">3.6.4.-</ecNumber>
    </recommendedName>
    <alternativeName>
        <fullName evidence="9">Ku80</fullName>
    </alternativeName>
</protein>
<keyword id="KW-0002">3D-structure</keyword>
<keyword id="KW-0067">ATP-binding</keyword>
<keyword id="KW-0903">Direct protein sequencing</keyword>
<keyword id="KW-0227">DNA damage</keyword>
<keyword id="KW-0233">DNA recombination</keyword>
<keyword id="KW-0234">DNA repair</keyword>
<keyword id="KW-0238">DNA-binding</keyword>
<keyword id="KW-0347">Helicase</keyword>
<keyword id="KW-0378">Hydrolase</keyword>
<keyword id="KW-0547">Nucleotide-binding</keyword>
<keyword id="KW-0539">Nucleus</keyword>
<keyword id="KW-1185">Reference proteome</keyword>
<keyword id="KW-0832">Ubl conjugation</keyword>
<proteinExistence type="evidence at protein level"/>
<accession>Q6DDS9</accession>
<accession>Q9W627</accession>